<feature type="chain" id="PRO_1000187437" description="Ornithine aminotransferase">
    <location>
        <begin position="1"/>
        <end position="396"/>
    </location>
</feature>
<feature type="modified residue" description="N6-(pyridoxal phosphate)lysine" evidence="1">
    <location>
        <position position="255"/>
    </location>
</feature>
<comment type="function">
    <text evidence="1">Catalyzes the interconversion of ornithine to glutamate semialdehyde.</text>
</comment>
<comment type="catalytic activity">
    <reaction evidence="1">
        <text>a 2-oxocarboxylate + L-ornithine = L-glutamate 5-semialdehyde + an L-alpha-amino acid</text>
        <dbReference type="Rhea" id="RHEA:13877"/>
        <dbReference type="ChEBI" id="CHEBI:35179"/>
        <dbReference type="ChEBI" id="CHEBI:46911"/>
        <dbReference type="ChEBI" id="CHEBI:58066"/>
        <dbReference type="ChEBI" id="CHEBI:59869"/>
        <dbReference type="EC" id="2.6.1.13"/>
    </reaction>
</comment>
<comment type="cofactor">
    <cofactor evidence="1">
        <name>pyridoxal 5'-phosphate</name>
        <dbReference type="ChEBI" id="CHEBI:597326"/>
    </cofactor>
</comment>
<comment type="pathway">
    <text evidence="1">Amino-acid biosynthesis; L-proline biosynthesis; L-glutamate 5-semialdehyde from L-ornithine: step 1/1.</text>
</comment>
<comment type="subcellular location">
    <subcellularLocation>
        <location evidence="1">Cytoplasm</location>
    </subcellularLocation>
</comment>
<comment type="similarity">
    <text evidence="1">Belongs to the class-III pyridoxal-phosphate-dependent aminotransferase family. OAT subfamily.</text>
</comment>
<evidence type="ECO:0000255" key="1">
    <source>
        <dbReference type="HAMAP-Rule" id="MF_01689"/>
    </source>
</evidence>
<protein>
    <recommendedName>
        <fullName evidence="1">Ornithine aminotransferase</fullName>
        <shortName evidence="1">OAT</shortName>
        <ecNumber evidence="1">2.6.1.13</ecNumber>
    </recommendedName>
    <alternativeName>
        <fullName evidence="1">Ornithine--oxo-acid aminotransferase</fullName>
    </alternativeName>
</protein>
<organism>
    <name type="scientific">Bacillus cereus (strain 03BB102)</name>
    <dbReference type="NCBI Taxonomy" id="572264"/>
    <lineage>
        <taxon>Bacteria</taxon>
        <taxon>Bacillati</taxon>
        <taxon>Bacillota</taxon>
        <taxon>Bacilli</taxon>
        <taxon>Bacillales</taxon>
        <taxon>Bacillaceae</taxon>
        <taxon>Bacillus</taxon>
        <taxon>Bacillus cereus group</taxon>
    </lineage>
</organism>
<keyword id="KW-0028">Amino-acid biosynthesis</keyword>
<keyword id="KW-0032">Aminotransferase</keyword>
<keyword id="KW-0963">Cytoplasm</keyword>
<keyword id="KW-0641">Proline biosynthesis</keyword>
<keyword id="KW-0663">Pyridoxal phosphate</keyword>
<keyword id="KW-0808">Transferase</keyword>
<name>OAT_BACC3</name>
<dbReference type="EC" id="2.6.1.13" evidence="1"/>
<dbReference type="EMBL" id="CP001407">
    <property type="protein sequence ID" value="ACO27776.1"/>
    <property type="molecule type" value="Genomic_DNA"/>
</dbReference>
<dbReference type="RefSeq" id="WP_000616652.1">
    <property type="nucleotide sequence ID" value="NZ_CP009318.1"/>
</dbReference>
<dbReference type="SMR" id="C1EL61"/>
<dbReference type="KEGG" id="bcx:BCA_1193"/>
<dbReference type="PATRIC" id="fig|572264.18.peg.1144"/>
<dbReference type="UniPathway" id="UPA00098">
    <property type="reaction ID" value="UER00358"/>
</dbReference>
<dbReference type="Proteomes" id="UP000002210">
    <property type="component" value="Chromosome"/>
</dbReference>
<dbReference type="GO" id="GO:0005737">
    <property type="term" value="C:cytoplasm"/>
    <property type="evidence" value="ECO:0007669"/>
    <property type="project" value="UniProtKB-SubCell"/>
</dbReference>
<dbReference type="GO" id="GO:0042802">
    <property type="term" value="F:identical protein binding"/>
    <property type="evidence" value="ECO:0007669"/>
    <property type="project" value="TreeGrafter"/>
</dbReference>
<dbReference type="GO" id="GO:0004587">
    <property type="term" value="F:ornithine aminotransferase activity"/>
    <property type="evidence" value="ECO:0007669"/>
    <property type="project" value="UniProtKB-UniRule"/>
</dbReference>
<dbReference type="GO" id="GO:0030170">
    <property type="term" value="F:pyridoxal phosphate binding"/>
    <property type="evidence" value="ECO:0007669"/>
    <property type="project" value="UniProtKB-UniRule"/>
</dbReference>
<dbReference type="GO" id="GO:0055129">
    <property type="term" value="P:L-proline biosynthetic process"/>
    <property type="evidence" value="ECO:0007669"/>
    <property type="project" value="UniProtKB-UniRule"/>
</dbReference>
<dbReference type="CDD" id="cd00610">
    <property type="entry name" value="OAT_like"/>
    <property type="match status" value="1"/>
</dbReference>
<dbReference type="FunFam" id="3.40.640.10:FF:000011">
    <property type="entry name" value="Ornithine aminotransferase"/>
    <property type="match status" value="1"/>
</dbReference>
<dbReference type="Gene3D" id="3.90.1150.10">
    <property type="entry name" value="Aspartate Aminotransferase, domain 1"/>
    <property type="match status" value="1"/>
</dbReference>
<dbReference type="Gene3D" id="3.40.640.10">
    <property type="entry name" value="Type I PLP-dependent aspartate aminotransferase-like (Major domain)"/>
    <property type="match status" value="1"/>
</dbReference>
<dbReference type="HAMAP" id="MF_01689">
    <property type="entry name" value="Ornith_aminotrans_3"/>
    <property type="match status" value="1"/>
</dbReference>
<dbReference type="InterPro" id="IPR005814">
    <property type="entry name" value="Aminotrans_3"/>
</dbReference>
<dbReference type="InterPro" id="IPR049704">
    <property type="entry name" value="Aminotrans_3_PPA_site"/>
</dbReference>
<dbReference type="InterPro" id="IPR050103">
    <property type="entry name" value="Class-III_PLP-dep_AT"/>
</dbReference>
<dbReference type="InterPro" id="IPR010164">
    <property type="entry name" value="Orn_aminotrans"/>
</dbReference>
<dbReference type="InterPro" id="IPR034757">
    <property type="entry name" value="Ornith_aminotrans_bact"/>
</dbReference>
<dbReference type="InterPro" id="IPR015424">
    <property type="entry name" value="PyrdxlP-dep_Trfase"/>
</dbReference>
<dbReference type="InterPro" id="IPR015421">
    <property type="entry name" value="PyrdxlP-dep_Trfase_major"/>
</dbReference>
<dbReference type="InterPro" id="IPR015422">
    <property type="entry name" value="PyrdxlP-dep_Trfase_small"/>
</dbReference>
<dbReference type="NCBIfam" id="TIGR01885">
    <property type="entry name" value="Orn_aminotrans"/>
    <property type="match status" value="1"/>
</dbReference>
<dbReference type="NCBIfam" id="NF003145">
    <property type="entry name" value="PRK04073.1"/>
    <property type="match status" value="1"/>
</dbReference>
<dbReference type="PANTHER" id="PTHR11986">
    <property type="entry name" value="AMINOTRANSFERASE CLASS III"/>
    <property type="match status" value="1"/>
</dbReference>
<dbReference type="PANTHER" id="PTHR11986:SF18">
    <property type="entry name" value="ORNITHINE AMINOTRANSFERASE, MITOCHONDRIAL"/>
    <property type="match status" value="1"/>
</dbReference>
<dbReference type="Pfam" id="PF00202">
    <property type="entry name" value="Aminotran_3"/>
    <property type="match status" value="1"/>
</dbReference>
<dbReference type="PIRSF" id="PIRSF000521">
    <property type="entry name" value="Transaminase_4ab_Lys_Orn"/>
    <property type="match status" value="1"/>
</dbReference>
<dbReference type="SUPFAM" id="SSF53383">
    <property type="entry name" value="PLP-dependent transferases"/>
    <property type="match status" value="1"/>
</dbReference>
<dbReference type="PROSITE" id="PS00600">
    <property type="entry name" value="AA_TRANSFER_CLASS_3"/>
    <property type="match status" value="1"/>
</dbReference>
<gene>
    <name evidence="1" type="primary">rocD</name>
    <name type="ordered locus">BCA_1193</name>
</gene>
<accession>C1EL61</accession>
<sequence length="396" mass="43300">MIQTKDIIELTDTYGANNYHPLPIVISKAEGVWVEDPEGNRYMDLLSAYSAVNQGHRHPKIINALIDQANRVTLTSRAFHSDQLGPWYEKVAKLTNKEMVLPMNTGAEAVETAIKTARRWAYDVKKVEANRAEIIVCEDNFHGRTMGAVSMSSNEEYKRGFGPMLPGIIVIPYGDLEALKAAITPNTAAFILEPIQGEAGINIPPAGFLKEALEVCKKENVLFVADEIQTGLGRTGKVFACDWDNVTPDMYILGKALGGGVFPISCVAANRDILGVFEPGSHGSTFGGNPLACAVSIAALEVLEEEKLTERSLQLGEKLVGQLKEIDNPMITEVRGKGLFIGIELNEPARPYCEQLKAAGLLCKETHENVIRIAPPLVISEEDLEWAFQKIKAVLS</sequence>
<proteinExistence type="inferred from homology"/>
<reference key="1">
    <citation type="submission" date="2009-02" db="EMBL/GenBank/DDBJ databases">
        <title>Genome sequence of Bacillus cereus 03BB102.</title>
        <authorList>
            <person name="Dodson R.J."/>
            <person name="Jackson P."/>
            <person name="Munk A.C."/>
            <person name="Brettin T."/>
            <person name="Bruce D."/>
            <person name="Detter C."/>
            <person name="Tapia R."/>
            <person name="Han C."/>
            <person name="Sutton G."/>
            <person name="Sims D."/>
        </authorList>
    </citation>
    <scope>NUCLEOTIDE SEQUENCE [LARGE SCALE GENOMIC DNA]</scope>
    <source>
        <strain>03BB102</strain>
    </source>
</reference>